<evidence type="ECO:0000250" key="1">
    <source>
        <dbReference type="UniProtKB" id="B2HST3"/>
    </source>
</evidence>
<evidence type="ECO:0000250" key="2">
    <source>
        <dbReference type="UniProtKB" id="P9WNR3"/>
    </source>
</evidence>
<evidence type="ECO:0000250" key="3">
    <source>
        <dbReference type="UniProtKB" id="P9WNR7"/>
    </source>
</evidence>
<evidence type="ECO:0000255" key="4"/>
<evidence type="ECO:0000256" key="5">
    <source>
        <dbReference type="SAM" id="MobiDB-lite"/>
    </source>
</evidence>
<evidence type="ECO:0000305" key="6"/>
<sequence>MTNQQHDHDFDHDRRSFASRTPVNNNPDKVVYRRGFVTRHQVTGWRFVMRRIAAGIALHDTRMLVDPLRTQSRAVLMGVLIVITGLIGSFVFSLIRPNGQAGSNAVLADRSTAALYVRVGEQLHPVLNLTSARLIVGRPVSPTTVKSTELDQFPRGNLIGIPGAPERMVQNTSTDANWTVCDGLNAPSRGGADGVGVTVIAGPLEDTGARAAALGPGQAVLVDSGAGTWLLWDGKRSPIDLADHAVTSGLGLGADVPAPRIIASGLFNAIPEAPPLTAPIIPDAGNPASFGVPAPIGAVVSSYALKDSGKTISDTVQYYAVLPDGLQQISPVLAAILRNNNSYGLQQPPRLGADEVAKLPVSRVLDTRRYPSEPVSLVDVTRDPVTCAYWSKPVGAATSSLTLLAGSALPVPDAVHTVELVGAGNGGVATRVALAAGTGYFTQTVGGGPDAPGAGSLFWVSDTGVRYGIDNEPQGVAGGGKAVEALGLNPPPVPIPWSVLSLFVPGPTLSRADALLAHDTLVPDSRPARPVSAEGGYR</sequence>
<feature type="chain" id="PRO_0000427082" description="ESX-3 secretion system ATPase EccB3">
    <location>
        <begin position="1"/>
        <end position="538"/>
    </location>
</feature>
<feature type="transmembrane region" description="Helical" evidence="4">
    <location>
        <begin position="75"/>
        <end position="95"/>
    </location>
</feature>
<feature type="region of interest" description="Disordered" evidence="5">
    <location>
        <begin position="1"/>
        <end position="25"/>
    </location>
</feature>
<feature type="compositionally biased region" description="Basic and acidic residues" evidence="5">
    <location>
        <begin position="1"/>
        <end position="16"/>
    </location>
</feature>
<name>ECCB3_MYCTO</name>
<protein>
    <recommendedName>
        <fullName evidence="2">ESX-3 secretion system ATPase EccB3</fullName>
        <ecNumber evidence="6">3.6.-.-</ecNumber>
    </recommendedName>
    <alternativeName>
        <fullName evidence="2">ESX conserved component B3</fullName>
    </alternativeName>
    <alternativeName>
        <fullName evidence="2">Type VII secretion system protein EccB3</fullName>
        <shortName evidence="2">T7SS protein EccB3</shortName>
    </alternativeName>
</protein>
<gene>
    <name evidence="2" type="primary">eccB3</name>
    <name type="ordered locus">MT0296</name>
</gene>
<reference key="1">
    <citation type="journal article" date="2002" name="J. Bacteriol.">
        <title>Whole-genome comparison of Mycobacterium tuberculosis clinical and laboratory strains.</title>
        <authorList>
            <person name="Fleischmann R.D."/>
            <person name="Alland D."/>
            <person name="Eisen J.A."/>
            <person name="Carpenter L."/>
            <person name="White O."/>
            <person name="Peterson J.D."/>
            <person name="DeBoy R.T."/>
            <person name="Dodson R.J."/>
            <person name="Gwinn M.L."/>
            <person name="Haft D.H."/>
            <person name="Hickey E.K."/>
            <person name="Kolonay J.F."/>
            <person name="Nelson W.C."/>
            <person name="Umayam L.A."/>
            <person name="Ermolaeva M.D."/>
            <person name="Salzberg S.L."/>
            <person name="Delcher A."/>
            <person name="Utterback T.R."/>
            <person name="Weidman J.F."/>
            <person name="Khouri H.M."/>
            <person name="Gill J."/>
            <person name="Mikula A."/>
            <person name="Bishai W."/>
            <person name="Jacobs W.R. Jr."/>
            <person name="Venter J.C."/>
            <person name="Fraser C.M."/>
        </authorList>
    </citation>
    <scope>NUCLEOTIDE SEQUENCE [LARGE SCALE GENOMIC DNA]</scope>
    <source>
        <strain>CDC 1551 / Oshkosh</strain>
    </source>
</reference>
<accession>P9WNR2</accession>
<accession>L0T5Z9</accession>
<accession>O53688</accession>
<accession>Q7DA38</accession>
<keyword id="KW-0067">ATP-binding</keyword>
<keyword id="KW-0997">Cell inner membrane</keyword>
<keyword id="KW-1003">Cell membrane</keyword>
<keyword id="KW-0378">Hydrolase</keyword>
<keyword id="KW-0472">Membrane</keyword>
<keyword id="KW-0547">Nucleotide-binding</keyword>
<keyword id="KW-1185">Reference proteome</keyword>
<keyword id="KW-0812">Transmembrane</keyword>
<keyword id="KW-1133">Transmembrane helix</keyword>
<keyword id="KW-0813">Transport</keyword>
<comment type="function">
    <text evidence="2 3">An ATPase (By similarity). Part of the ESX-3 specialized secretion system, which is important for iron and zinc uptake or homeostasis.</text>
</comment>
<comment type="subunit">
    <text evidence="1">Part of the ESX-3 / type VII secretion system (T7SS), which is composed of cytosolic and membrane components. The ESX-3 membrane complex is composed of EccB3, EccC3, EccD3 and EccE3.</text>
</comment>
<comment type="subcellular location">
    <subcellularLocation>
        <location evidence="1">Cell inner membrane</location>
        <topology evidence="4">Single-pass membrane protein</topology>
    </subcellularLocation>
</comment>
<comment type="similarity">
    <text evidence="6">Belongs to the EccB family.</text>
</comment>
<dbReference type="EC" id="3.6.-.-" evidence="6"/>
<dbReference type="EMBL" id="AE000516">
    <property type="protein sequence ID" value="AAK44520.1"/>
    <property type="molecule type" value="Genomic_DNA"/>
</dbReference>
<dbReference type="PIR" id="A70836">
    <property type="entry name" value="A70836"/>
</dbReference>
<dbReference type="RefSeq" id="WP_003401472.1">
    <property type="nucleotide sequence ID" value="NZ_KK341227.1"/>
</dbReference>
<dbReference type="SMR" id="P9WNR2"/>
<dbReference type="KEGG" id="mtc:MT0296"/>
<dbReference type="PATRIC" id="fig|83331.31.peg.319"/>
<dbReference type="HOGENOM" id="CLU_036302_3_0_11"/>
<dbReference type="Proteomes" id="UP000001020">
    <property type="component" value="Chromosome"/>
</dbReference>
<dbReference type="GO" id="GO:0005576">
    <property type="term" value="C:extracellular region"/>
    <property type="evidence" value="ECO:0007669"/>
    <property type="project" value="TreeGrafter"/>
</dbReference>
<dbReference type="GO" id="GO:0005886">
    <property type="term" value="C:plasma membrane"/>
    <property type="evidence" value="ECO:0007669"/>
    <property type="project" value="UniProtKB-SubCell"/>
</dbReference>
<dbReference type="GO" id="GO:0005524">
    <property type="term" value="F:ATP binding"/>
    <property type="evidence" value="ECO:0007669"/>
    <property type="project" value="UniProtKB-KW"/>
</dbReference>
<dbReference type="GO" id="GO:0016787">
    <property type="term" value="F:hydrolase activity"/>
    <property type="evidence" value="ECO:0007669"/>
    <property type="project" value="UniProtKB-KW"/>
</dbReference>
<dbReference type="FunFam" id="3.30.2390.20:FF:000001">
    <property type="entry name" value="ESX-1 secretion system ATPase EccB1"/>
    <property type="match status" value="1"/>
</dbReference>
<dbReference type="Gene3D" id="3.30.2390.20">
    <property type="entry name" value="Type VII secretion system EccB, repeat 1 domain"/>
    <property type="match status" value="1"/>
</dbReference>
<dbReference type="Gene3D" id="2.40.50.910">
    <property type="entry name" value="Type VII secretion system EccB, repeat 3 domain"/>
    <property type="match status" value="1"/>
</dbReference>
<dbReference type="InterPro" id="IPR007795">
    <property type="entry name" value="T7SS_EccB"/>
</dbReference>
<dbReference type="InterPro" id="IPR044857">
    <property type="entry name" value="T7SS_EccB_R1"/>
</dbReference>
<dbReference type="InterPro" id="IPR042485">
    <property type="entry name" value="T7SS_EccB_R3"/>
</dbReference>
<dbReference type="NCBIfam" id="TIGR03919">
    <property type="entry name" value="T7SS_EccB"/>
    <property type="match status" value="1"/>
</dbReference>
<dbReference type="PANTHER" id="PTHR40765">
    <property type="entry name" value="ESX-2 SECRETION SYSTEM ATPASE ECCB2"/>
    <property type="match status" value="1"/>
</dbReference>
<dbReference type="PANTHER" id="PTHR40765:SF2">
    <property type="entry name" value="ESX-2 SECRETION SYSTEM ATPASE ECCB2"/>
    <property type="match status" value="1"/>
</dbReference>
<dbReference type="Pfam" id="PF05108">
    <property type="entry name" value="T7SS_ESX1_EccB"/>
    <property type="match status" value="1"/>
</dbReference>
<proteinExistence type="inferred from homology"/>
<organism>
    <name type="scientific">Mycobacterium tuberculosis (strain CDC 1551 / Oshkosh)</name>
    <dbReference type="NCBI Taxonomy" id="83331"/>
    <lineage>
        <taxon>Bacteria</taxon>
        <taxon>Bacillati</taxon>
        <taxon>Actinomycetota</taxon>
        <taxon>Actinomycetes</taxon>
        <taxon>Mycobacteriales</taxon>
        <taxon>Mycobacteriaceae</taxon>
        <taxon>Mycobacterium</taxon>
        <taxon>Mycobacterium tuberculosis complex</taxon>
    </lineage>
</organism>